<proteinExistence type="inferred from homology"/>
<gene>
    <name type="ordered locus">trd_1392</name>
</gene>
<reference key="1">
    <citation type="journal article" date="2009" name="PLoS ONE">
        <title>Complete genome sequence of the aerobic CO-oxidizing thermophile Thermomicrobium roseum.</title>
        <authorList>
            <person name="Wu D."/>
            <person name="Raymond J."/>
            <person name="Wu M."/>
            <person name="Chatterji S."/>
            <person name="Ren Q."/>
            <person name="Graham J.E."/>
            <person name="Bryant D.A."/>
            <person name="Robb F."/>
            <person name="Colman A."/>
            <person name="Tallon L.J."/>
            <person name="Badger J.H."/>
            <person name="Madupu R."/>
            <person name="Ward N.L."/>
            <person name="Eisen J.A."/>
        </authorList>
    </citation>
    <scope>NUCLEOTIDE SEQUENCE [LARGE SCALE GENOMIC DNA]</scope>
    <source>
        <strain>ATCC 27502 / DSM 5159 / P-2</strain>
    </source>
</reference>
<protein>
    <recommendedName>
        <fullName evidence="1">4-hydroxy-2-oxovalerate aldolase</fullName>
        <shortName evidence="1">HOA</shortName>
        <ecNumber evidence="1">4.1.3.39</ecNumber>
    </recommendedName>
    <alternativeName>
        <fullName evidence="1">4-hydroxy-2-keto-pentanoic acid aldolase</fullName>
    </alternativeName>
    <alternativeName>
        <fullName evidence="1">4-hydroxy-2-oxopentanoate aldolase</fullName>
    </alternativeName>
</protein>
<accession>B9L2J0</accession>
<comment type="catalytic activity">
    <reaction evidence="1">
        <text>(S)-4-hydroxy-2-oxopentanoate = acetaldehyde + pyruvate</text>
        <dbReference type="Rhea" id="RHEA:22624"/>
        <dbReference type="ChEBI" id="CHEBI:15343"/>
        <dbReference type="ChEBI" id="CHEBI:15361"/>
        <dbReference type="ChEBI" id="CHEBI:73143"/>
        <dbReference type="EC" id="4.1.3.39"/>
    </reaction>
</comment>
<comment type="similarity">
    <text evidence="1">Belongs to the 4-hydroxy-2-oxovalerate aldolase family.</text>
</comment>
<evidence type="ECO:0000255" key="1">
    <source>
        <dbReference type="HAMAP-Rule" id="MF_01656"/>
    </source>
</evidence>
<sequence length="356" mass="38125">MKTLTPPRVTDTTLRDGSHAMRHQFTREQVRAIVAALDEAGVPVIEVTHGDGLAGSSIQYGFSATSELELIEEAAKTAKRAKIAALLLPGIGTRRELSAAIERGIKVVRIATQCTEADISEQHFGMAKEMGLETVGFLMMAHMRPPEFLAEQAALMESYGADCVYIVDSAGAMLPDDVRRRVAALKERLSIQVGFHAHNNLGLAIGNTLAAIEEGADQVDGCLRGLGAGAGNAPTELIAAVLDKLGINPGLDVFKLMDAAEYIVAPIMPYQPIPDRDAITIGYAGVYSTFLLHARHIAAEFGLDPREILVELGRRQAVAGQEDWILDVALDILRRKRAAEGAGDAREPAAAERSAD</sequence>
<feature type="chain" id="PRO_0000387927" description="4-hydroxy-2-oxovalerate aldolase">
    <location>
        <begin position="1"/>
        <end position="356"/>
    </location>
</feature>
<feature type="domain" description="Pyruvate carboxyltransferase" evidence="1">
    <location>
        <begin position="7"/>
        <end position="257"/>
    </location>
</feature>
<feature type="active site" description="Proton acceptor" evidence="1">
    <location>
        <position position="19"/>
    </location>
</feature>
<feature type="binding site" evidence="1">
    <location>
        <begin position="15"/>
        <end position="16"/>
    </location>
    <ligand>
        <name>substrate</name>
    </ligand>
</feature>
<feature type="binding site" evidence="1">
    <location>
        <position position="16"/>
    </location>
    <ligand>
        <name>Mn(2+)</name>
        <dbReference type="ChEBI" id="CHEBI:29035"/>
    </ligand>
</feature>
<feature type="binding site" evidence="1">
    <location>
        <position position="169"/>
    </location>
    <ligand>
        <name>substrate</name>
    </ligand>
</feature>
<feature type="binding site" evidence="1">
    <location>
        <position position="196"/>
    </location>
    <ligand>
        <name>Mn(2+)</name>
        <dbReference type="ChEBI" id="CHEBI:29035"/>
    </ligand>
</feature>
<feature type="binding site" evidence="1">
    <location>
        <position position="196"/>
    </location>
    <ligand>
        <name>substrate</name>
    </ligand>
</feature>
<feature type="binding site" evidence="1">
    <location>
        <position position="198"/>
    </location>
    <ligand>
        <name>Mn(2+)</name>
        <dbReference type="ChEBI" id="CHEBI:29035"/>
    </ligand>
</feature>
<feature type="binding site" evidence="1">
    <location>
        <position position="287"/>
    </location>
    <ligand>
        <name>substrate</name>
    </ligand>
</feature>
<feature type="site" description="Transition state stabilizer" evidence="1">
    <location>
        <position position="15"/>
    </location>
</feature>
<organism>
    <name type="scientific">Thermomicrobium roseum (strain ATCC 27502 / DSM 5159 / P-2)</name>
    <dbReference type="NCBI Taxonomy" id="309801"/>
    <lineage>
        <taxon>Bacteria</taxon>
        <taxon>Pseudomonadati</taxon>
        <taxon>Thermomicrobiota</taxon>
        <taxon>Thermomicrobia</taxon>
        <taxon>Thermomicrobiales</taxon>
        <taxon>Thermomicrobiaceae</taxon>
        <taxon>Thermomicrobium</taxon>
    </lineage>
</organism>
<keyword id="KW-0058">Aromatic hydrocarbons catabolism</keyword>
<keyword id="KW-0456">Lyase</keyword>
<keyword id="KW-0464">Manganese</keyword>
<keyword id="KW-0479">Metal-binding</keyword>
<keyword id="KW-1185">Reference proteome</keyword>
<name>HOA_THERP</name>
<dbReference type="EC" id="4.1.3.39" evidence="1"/>
<dbReference type="EMBL" id="CP001275">
    <property type="protein sequence ID" value="ACM06249.1"/>
    <property type="molecule type" value="Genomic_DNA"/>
</dbReference>
<dbReference type="SMR" id="B9L2J0"/>
<dbReference type="STRING" id="309801.trd_1392"/>
<dbReference type="KEGG" id="tro:trd_1392"/>
<dbReference type="eggNOG" id="COG0119">
    <property type="taxonomic scope" value="Bacteria"/>
</dbReference>
<dbReference type="HOGENOM" id="CLU_049173_0_0_0"/>
<dbReference type="OrthoDB" id="9804858at2"/>
<dbReference type="Proteomes" id="UP000000447">
    <property type="component" value="Chromosome"/>
</dbReference>
<dbReference type="GO" id="GO:0003852">
    <property type="term" value="F:2-isopropylmalate synthase activity"/>
    <property type="evidence" value="ECO:0007669"/>
    <property type="project" value="TreeGrafter"/>
</dbReference>
<dbReference type="GO" id="GO:0008701">
    <property type="term" value="F:4-hydroxy-2-oxovalerate aldolase activity"/>
    <property type="evidence" value="ECO:0007669"/>
    <property type="project" value="UniProtKB-UniRule"/>
</dbReference>
<dbReference type="GO" id="GO:0030145">
    <property type="term" value="F:manganese ion binding"/>
    <property type="evidence" value="ECO:0007669"/>
    <property type="project" value="UniProtKB-UniRule"/>
</dbReference>
<dbReference type="GO" id="GO:0009056">
    <property type="term" value="P:catabolic process"/>
    <property type="evidence" value="ECO:0007669"/>
    <property type="project" value="UniProtKB-KW"/>
</dbReference>
<dbReference type="GO" id="GO:0009098">
    <property type="term" value="P:L-leucine biosynthetic process"/>
    <property type="evidence" value="ECO:0007669"/>
    <property type="project" value="TreeGrafter"/>
</dbReference>
<dbReference type="CDD" id="cd07943">
    <property type="entry name" value="DRE_TIM_HOA"/>
    <property type="match status" value="1"/>
</dbReference>
<dbReference type="Gene3D" id="1.10.8.60">
    <property type="match status" value="1"/>
</dbReference>
<dbReference type="Gene3D" id="3.20.20.70">
    <property type="entry name" value="Aldolase class I"/>
    <property type="match status" value="1"/>
</dbReference>
<dbReference type="HAMAP" id="MF_01656">
    <property type="entry name" value="HOA"/>
    <property type="match status" value="1"/>
</dbReference>
<dbReference type="InterPro" id="IPR050073">
    <property type="entry name" value="2-IPM_HCS-like"/>
</dbReference>
<dbReference type="InterPro" id="IPR017629">
    <property type="entry name" value="4OH_2_O-val_aldolase"/>
</dbReference>
<dbReference type="InterPro" id="IPR013785">
    <property type="entry name" value="Aldolase_TIM"/>
</dbReference>
<dbReference type="InterPro" id="IPR012425">
    <property type="entry name" value="DmpG_comm"/>
</dbReference>
<dbReference type="InterPro" id="IPR035685">
    <property type="entry name" value="DRE_TIM_HOA"/>
</dbReference>
<dbReference type="InterPro" id="IPR000891">
    <property type="entry name" value="PYR_CT"/>
</dbReference>
<dbReference type="NCBIfam" id="TIGR03217">
    <property type="entry name" value="4OH_2_O_val_ald"/>
    <property type="match status" value="1"/>
</dbReference>
<dbReference type="NCBIfam" id="NF006049">
    <property type="entry name" value="PRK08195.1"/>
    <property type="match status" value="1"/>
</dbReference>
<dbReference type="PANTHER" id="PTHR10277:SF9">
    <property type="entry name" value="2-ISOPROPYLMALATE SYNTHASE 1, CHLOROPLASTIC-RELATED"/>
    <property type="match status" value="1"/>
</dbReference>
<dbReference type="PANTHER" id="PTHR10277">
    <property type="entry name" value="HOMOCITRATE SYNTHASE-RELATED"/>
    <property type="match status" value="1"/>
</dbReference>
<dbReference type="Pfam" id="PF07836">
    <property type="entry name" value="DmpG_comm"/>
    <property type="match status" value="1"/>
</dbReference>
<dbReference type="Pfam" id="PF00682">
    <property type="entry name" value="HMGL-like"/>
    <property type="match status" value="1"/>
</dbReference>
<dbReference type="SUPFAM" id="SSF51569">
    <property type="entry name" value="Aldolase"/>
    <property type="match status" value="1"/>
</dbReference>
<dbReference type="SUPFAM" id="SSF89000">
    <property type="entry name" value="post-HMGL domain-like"/>
    <property type="match status" value="1"/>
</dbReference>
<dbReference type="PROSITE" id="PS50991">
    <property type="entry name" value="PYR_CT"/>
    <property type="match status" value="1"/>
</dbReference>